<evidence type="ECO:0000255" key="1">
    <source>
        <dbReference type="HAMAP-Rule" id="MF_01357"/>
    </source>
</evidence>
<evidence type="ECO:0000256" key="2">
    <source>
        <dbReference type="SAM" id="MobiDB-lite"/>
    </source>
</evidence>
<organism>
    <name type="scientific">Acidothermus cellulolyticus (strain ATCC 43068 / DSM 8971 / 11B)</name>
    <dbReference type="NCBI Taxonomy" id="351607"/>
    <lineage>
        <taxon>Bacteria</taxon>
        <taxon>Bacillati</taxon>
        <taxon>Actinomycetota</taxon>
        <taxon>Actinomycetes</taxon>
        <taxon>Acidothermales</taxon>
        <taxon>Acidothermaceae</taxon>
        <taxon>Acidothermus</taxon>
    </lineage>
</organism>
<reference key="1">
    <citation type="journal article" date="2009" name="Genome Res.">
        <title>Complete genome of the cellulolytic thermophile Acidothermus cellulolyticus 11B provides insights into its ecophysiological and evolutionary adaptations.</title>
        <authorList>
            <person name="Barabote R.D."/>
            <person name="Xie G."/>
            <person name="Leu D.H."/>
            <person name="Normand P."/>
            <person name="Necsulea A."/>
            <person name="Daubin V."/>
            <person name="Medigue C."/>
            <person name="Adney W.S."/>
            <person name="Xu X.C."/>
            <person name="Lapidus A."/>
            <person name="Parales R.E."/>
            <person name="Detter C."/>
            <person name="Pujic P."/>
            <person name="Bruce D."/>
            <person name="Lavire C."/>
            <person name="Challacombe J.F."/>
            <person name="Brettin T.S."/>
            <person name="Berry A.M."/>
        </authorList>
    </citation>
    <scope>NUCLEOTIDE SEQUENCE [LARGE SCALE GENOMIC DNA]</scope>
    <source>
        <strain>ATCC 43068 / DSM 8971 / 11B</strain>
    </source>
</reference>
<feature type="chain" id="PRO_0000358033" description="NADH-quinone oxidoreductase subunit C">
    <location>
        <begin position="1"/>
        <end position="192"/>
    </location>
</feature>
<feature type="region of interest" description="Disordered" evidence="2">
    <location>
        <begin position="170"/>
        <end position="192"/>
    </location>
</feature>
<proteinExistence type="inferred from homology"/>
<name>NUOC_ACIC1</name>
<sequence length="192" mass="22075">MTEPVLRGLPSSPRPFGGYFDQVADTLAVAYPRLPDAIERTDVDRGELTFHVRREYLRELALVLRDDERLRFELLNSLSGVHYPTDVGRELHVVYELTSMTYRRHIRLEVAAPDADPHIPSVVDVWPTADFQERETWDMFGVIFDGHPALTRILMPDDWPGHPQRKDYPLGGIPVEYKGATVPPPDERRQYA</sequence>
<protein>
    <recommendedName>
        <fullName evidence="1">NADH-quinone oxidoreductase subunit C</fullName>
        <ecNumber evidence="1">7.1.1.-</ecNumber>
    </recommendedName>
    <alternativeName>
        <fullName evidence="1">NADH dehydrogenase I subunit C</fullName>
    </alternativeName>
    <alternativeName>
        <fullName evidence="1">NDH-1 subunit C</fullName>
    </alternativeName>
</protein>
<accession>A0LRI3</accession>
<gene>
    <name evidence="1" type="primary">nuoC</name>
    <name type="ordered locus">Acel_0269</name>
</gene>
<comment type="function">
    <text evidence="1">NDH-1 shuttles electrons from NADH, via FMN and iron-sulfur (Fe-S) centers, to quinones in the respiratory chain. The immediate electron acceptor for the enzyme in this species is believed to be a menaquinone. Couples the redox reaction to proton translocation (for every two electrons transferred, four hydrogen ions are translocated across the cytoplasmic membrane), and thus conserves the redox energy in a proton gradient.</text>
</comment>
<comment type="catalytic activity">
    <reaction evidence="1">
        <text>a quinone + NADH + 5 H(+)(in) = a quinol + NAD(+) + 4 H(+)(out)</text>
        <dbReference type="Rhea" id="RHEA:57888"/>
        <dbReference type="ChEBI" id="CHEBI:15378"/>
        <dbReference type="ChEBI" id="CHEBI:24646"/>
        <dbReference type="ChEBI" id="CHEBI:57540"/>
        <dbReference type="ChEBI" id="CHEBI:57945"/>
        <dbReference type="ChEBI" id="CHEBI:132124"/>
    </reaction>
</comment>
<comment type="subunit">
    <text evidence="1">NDH-1 is composed of 14 different subunits. Subunits NuoB, C, D, E, F, and G constitute the peripheral sector of the complex.</text>
</comment>
<comment type="subcellular location">
    <subcellularLocation>
        <location evidence="1">Cell membrane</location>
        <topology evidence="1">Peripheral membrane protein</topology>
        <orientation evidence="1">Cytoplasmic side</orientation>
    </subcellularLocation>
</comment>
<comment type="similarity">
    <text evidence="1">Belongs to the complex I 30 kDa subunit family.</text>
</comment>
<dbReference type="EC" id="7.1.1.-" evidence="1"/>
<dbReference type="EMBL" id="CP000481">
    <property type="protein sequence ID" value="ABK52043.1"/>
    <property type="molecule type" value="Genomic_DNA"/>
</dbReference>
<dbReference type="RefSeq" id="WP_011719106.1">
    <property type="nucleotide sequence ID" value="NC_008578.1"/>
</dbReference>
<dbReference type="SMR" id="A0LRI3"/>
<dbReference type="FunCoup" id="A0LRI3">
    <property type="interactions" value="96"/>
</dbReference>
<dbReference type="STRING" id="351607.Acel_0269"/>
<dbReference type="KEGG" id="ace:Acel_0269"/>
<dbReference type="eggNOG" id="COG0852">
    <property type="taxonomic scope" value="Bacteria"/>
</dbReference>
<dbReference type="HOGENOM" id="CLU_042628_4_0_11"/>
<dbReference type="InParanoid" id="A0LRI3"/>
<dbReference type="OrthoDB" id="9803286at2"/>
<dbReference type="Proteomes" id="UP000008221">
    <property type="component" value="Chromosome"/>
</dbReference>
<dbReference type="GO" id="GO:0005886">
    <property type="term" value="C:plasma membrane"/>
    <property type="evidence" value="ECO:0007669"/>
    <property type="project" value="UniProtKB-SubCell"/>
</dbReference>
<dbReference type="GO" id="GO:0008137">
    <property type="term" value="F:NADH dehydrogenase (ubiquinone) activity"/>
    <property type="evidence" value="ECO:0007669"/>
    <property type="project" value="InterPro"/>
</dbReference>
<dbReference type="GO" id="GO:0050136">
    <property type="term" value="F:NADH:ubiquinone reductase (non-electrogenic) activity"/>
    <property type="evidence" value="ECO:0007669"/>
    <property type="project" value="UniProtKB-UniRule"/>
</dbReference>
<dbReference type="GO" id="GO:0048038">
    <property type="term" value="F:quinone binding"/>
    <property type="evidence" value="ECO:0007669"/>
    <property type="project" value="UniProtKB-KW"/>
</dbReference>
<dbReference type="Gene3D" id="3.30.460.80">
    <property type="entry name" value="NADH:ubiquinone oxidoreductase, 30kDa subunit"/>
    <property type="match status" value="1"/>
</dbReference>
<dbReference type="HAMAP" id="MF_01357">
    <property type="entry name" value="NDH1_NuoC"/>
    <property type="match status" value="1"/>
</dbReference>
<dbReference type="InterPro" id="IPR010218">
    <property type="entry name" value="NADH_DH_suC"/>
</dbReference>
<dbReference type="InterPro" id="IPR037232">
    <property type="entry name" value="NADH_quin_OxRdtase_su_C/D-like"/>
</dbReference>
<dbReference type="InterPro" id="IPR001268">
    <property type="entry name" value="NADH_UbQ_OxRdtase_30kDa_su"/>
</dbReference>
<dbReference type="NCBIfam" id="TIGR01961">
    <property type="entry name" value="NuoC_fam"/>
    <property type="match status" value="1"/>
</dbReference>
<dbReference type="NCBIfam" id="NF005856">
    <property type="entry name" value="PRK07785.1"/>
    <property type="match status" value="1"/>
</dbReference>
<dbReference type="PANTHER" id="PTHR10884:SF14">
    <property type="entry name" value="NADH DEHYDROGENASE [UBIQUINONE] IRON-SULFUR PROTEIN 3, MITOCHONDRIAL"/>
    <property type="match status" value="1"/>
</dbReference>
<dbReference type="PANTHER" id="PTHR10884">
    <property type="entry name" value="NADH DEHYDROGENASE UBIQUINONE IRON-SULFUR PROTEIN 3"/>
    <property type="match status" value="1"/>
</dbReference>
<dbReference type="Pfam" id="PF00329">
    <property type="entry name" value="Complex1_30kDa"/>
    <property type="match status" value="1"/>
</dbReference>
<dbReference type="SUPFAM" id="SSF143243">
    <property type="entry name" value="Nqo5-like"/>
    <property type="match status" value="1"/>
</dbReference>
<keyword id="KW-1003">Cell membrane</keyword>
<keyword id="KW-0472">Membrane</keyword>
<keyword id="KW-0520">NAD</keyword>
<keyword id="KW-0874">Quinone</keyword>
<keyword id="KW-1185">Reference proteome</keyword>
<keyword id="KW-1278">Translocase</keyword>
<keyword id="KW-0813">Transport</keyword>